<gene>
    <name evidence="1" type="primary">dnaJ</name>
    <name type="ordered locus">Smal_1601</name>
</gene>
<comment type="function">
    <text evidence="1">Participates actively in the response to hyperosmotic and heat shock by preventing the aggregation of stress-denatured proteins and by disaggregating proteins, also in an autonomous, DnaK-independent fashion. Unfolded proteins bind initially to DnaJ; upon interaction with the DnaJ-bound protein, DnaK hydrolyzes its bound ATP, resulting in the formation of a stable complex. GrpE releases ADP from DnaK; ATP binding to DnaK triggers the release of the substrate protein, thus completing the reaction cycle. Several rounds of ATP-dependent interactions between DnaJ, DnaK and GrpE are required for fully efficient folding. Also involved, together with DnaK and GrpE, in the DNA replication of plasmids through activation of initiation proteins.</text>
</comment>
<comment type="cofactor">
    <cofactor evidence="1">
        <name>Zn(2+)</name>
        <dbReference type="ChEBI" id="CHEBI:29105"/>
    </cofactor>
    <text evidence="1">Binds 2 Zn(2+) ions per monomer.</text>
</comment>
<comment type="subunit">
    <text evidence="1">Homodimer.</text>
</comment>
<comment type="subcellular location">
    <subcellularLocation>
        <location evidence="1">Cytoplasm</location>
    </subcellularLocation>
</comment>
<comment type="domain">
    <text evidence="1">The J domain is necessary and sufficient to stimulate DnaK ATPase activity. Zinc center 1 plays an important role in the autonomous, DnaK-independent chaperone activity of DnaJ. Zinc center 2 is essential for interaction with DnaK and for DnaJ activity.</text>
</comment>
<comment type="similarity">
    <text evidence="1">Belongs to the DnaJ family.</text>
</comment>
<feature type="chain" id="PRO_1000137730" description="Chaperone protein DnaJ">
    <location>
        <begin position="1"/>
        <end position="376"/>
    </location>
</feature>
<feature type="domain" description="J" evidence="1">
    <location>
        <begin position="5"/>
        <end position="70"/>
    </location>
</feature>
<feature type="repeat" description="CXXCXGXG motif">
    <location>
        <begin position="145"/>
        <end position="152"/>
    </location>
</feature>
<feature type="repeat" description="CXXCXGXG motif">
    <location>
        <begin position="161"/>
        <end position="168"/>
    </location>
</feature>
<feature type="repeat" description="CXXCXGXG motif">
    <location>
        <begin position="183"/>
        <end position="190"/>
    </location>
</feature>
<feature type="repeat" description="CXXCXGXG motif">
    <location>
        <begin position="197"/>
        <end position="204"/>
    </location>
</feature>
<feature type="zinc finger region" description="CR-type" evidence="1">
    <location>
        <begin position="132"/>
        <end position="209"/>
    </location>
</feature>
<feature type="region of interest" description="Disordered" evidence="2">
    <location>
        <begin position="223"/>
        <end position="242"/>
    </location>
</feature>
<feature type="binding site" evidence="1">
    <location>
        <position position="145"/>
    </location>
    <ligand>
        <name>Zn(2+)</name>
        <dbReference type="ChEBI" id="CHEBI:29105"/>
        <label>1</label>
    </ligand>
</feature>
<feature type="binding site" evidence="1">
    <location>
        <position position="148"/>
    </location>
    <ligand>
        <name>Zn(2+)</name>
        <dbReference type="ChEBI" id="CHEBI:29105"/>
        <label>1</label>
    </ligand>
</feature>
<feature type="binding site" evidence="1">
    <location>
        <position position="161"/>
    </location>
    <ligand>
        <name>Zn(2+)</name>
        <dbReference type="ChEBI" id="CHEBI:29105"/>
        <label>2</label>
    </ligand>
</feature>
<feature type="binding site" evidence="1">
    <location>
        <position position="164"/>
    </location>
    <ligand>
        <name>Zn(2+)</name>
        <dbReference type="ChEBI" id="CHEBI:29105"/>
        <label>2</label>
    </ligand>
</feature>
<feature type="binding site" evidence="1">
    <location>
        <position position="183"/>
    </location>
    <ligand>
        <name>Zn(2+)</name>
        <dbReference type="ChEBI" id="CHEBI:29105"/>
        <label>2</label>
    </ligand>
</feature>
<feature type="binding site" evidence="1">
    <location>
        <position position="186"/>
    </location>
    <ligand>
        <name>Zn(2+)</name>
        <dbReference type="ChEBI" id="CHEBI:29105"/>
        <label>2</label>
    </ligand>
</feature>
<feature type="binding site" evidence="1">
    <location>
        <position position="197"/>
    </location>
    <ligand>
        <name>Zn(2+)</name>
        <dbReference type="ChEBI" id="CHEBI:29105"/>
        <label>1</label>
    </ligand>
</feature>
<feature type="binding site" evidence="1">
    <location>
        <position position="200"/>
    </location>
    <ligand>
        <name>Zn(2+)</name>
        <dbReference type="ChEBI" id="CHEBI:29105"/>
        <label>1</label>
    </ligand>
</feature>
<keyword id="KW-0143">Chaperone</keyword>
<keyword id="KW-0963">Cytoplasm</keyword>
<keyword id="KW-0235">DNA replication</keyword>
<keyword id="KW-0479">Metal-binding</keyword>
<keyword id="KW-0677">Repeat</keyword>
<keyword id="KW-0346">Stress response</keyword>
<keyword id="KW-0862">Zinc</keyword>
<keyword id="KW-0863">Zinc-finger</keyword>
<protein>
    <recommendedName>
        <fullName evidence="1">Chaperone protein DnaJ</fullName>
    </recommendedName>
</protein>
<dbReference type="EMBL" id="CP001111">
    <property type="protein sequence ID" value="ACF51306.1"/>
    <property type="molecule type" value="Genomic_DNA"/>
</dbReference>
<dbReference type="RefSeq" id="WP_004153270.1">
    <property type="nucleotide sequence ID" value="NC_011071.1"/>
</dbReference>
<dbReference type="SMR" id="B4SSQ7"/>
<dbReference type="STRING" id="391008.Smal_1601"/>
<dbReference type="KEGG" id="smt:Smal_1601"/>
<dbReference type="eggNOG" id="COG0484">
    <property type="taxonomic scope" value="Bacteria"/>
</dbReference>
<dbReference type="HOGENOM" id="CLU_017633_0_7_6"/>
<dbReference type="OrthoDB" id="9779889at2"/>
<dbReference type="Proteomes" id="UP000001867">
    <property type="component" value="Chromosome"/>
</dbReference>
<dbReference type="GO" id="GO:0005737">
    <property type="term" value="C:cytoplasm"/>
    <property type="evidence" value="ECO:0007669"/>
    <property type="project" value="UniProtKB-SubCell"/>
</dbReference>
<dbReference type="GO" id="GO:0005524">
    <property type="term" value="F:ATP binding"/>
    <property type="evidence" value="ECO:0007669"/>
    <property type="project" value="InterPro"/>
</dbReference>
<dbReference type="GO" id="GO:0031072">
    <property type="term" value="F:heat shock protein binding"/>
    <property type="evidence" value="ECO:0007669"/>
    <property type="project" value="InterPro"/>
</dbReference>
<dbReference type="GO" id="GO:0051082">
    <property type="term" value="F:unfolded protein binding"/>
    <property type="evidence" value="ECO:0007669"/>
    <property type="project" value="UniProtKB-UniRule"/>
</dbReference>
<dbReference type="GO" id="GO:0008270">
    <property type="term" value="F:zinc ion binding"/>
    <property type="evidence" value="ECO:0007669"/>
    <property type="project" value="UniProtKB-UniRule"/>
</dbReference>
<dbReference type="GO" id="GO:0051085">
    <property type="term" value="P:chaperone cofactor-dependent protein refolding"/>
    <property type="evidence" value="ECO:0007669"/>
    <property type="project" value="TreeGrafter"/>
</dbReference>
<dbReference type="GO" id="GO:0006260">
    <property type="term" value="P:DNA replication"/>
    <property type="evidence" value="ECO:0007669"/>
    <property type="project" value="UniProtKB-KW"/>
</dbReference>
<dbReference type="GO" id="GO:0042026">
    <property type="term" value="P:protein refolding"/>
    <property type="evidence" value="ECO:0007669"/>
    <property type="project" value="TreeGrafter"/>
</dbReference>
<dbReference type="GO" id="GO:0009408">
    <property type="term" value="P:response to heat"/>
    <property type="evidence" value="ECO:0007669"/>
    <property type="project" value="InterPro"/>
</dbReference>
<dbReference type="CDD" id="cd06257">
    <property type="entry name" value="DnaJ"/>
    <property type="match status" value="1"/>
</dbReference>
<dbReference type="CDD" id="cd10747">
    <property type="entry name" value="DnaJ_C"/>
    <property type="match status" value="1"/>
</dbReference>
<dbReference type="CDD" id="cd10719">
    <property type="entry name" value="DnaJ_zf"/>
    <property type="match status" value="1"/>
</dbReference>
<dbReference type="FunFam" id="1.10.287.110:FF:000034">
    <property type="entry name" value="Chaperone protein DnaJ"/>
    <property type="match status" value="1"/>
</dbReference>
<dbReference type="FunFam" id="2.10.230.10:FF:000002">
    <property type="entry name" value="Molecular chaperone DnaJ"/>
    <property type="match status" value="1"/>
</dbReference>
<dbReference type="FunFam" id="2.60.260.20:FF:000004">
    <property type="entry name" value="Molecular chaperone DnaJ"/>
    <property type="match status" value="1"/>
</dbReference>
<dbReference type="Gene3D" id="1.10.287.110">
    <property type="entry name" value="DnaJ domain"/>
    <property type="match status" value="1"/>
</dbReference>
<dbReference type="Gene3D" id="2.10.230.10">
    <property type="entry name" value="Heat shock protein DnaJ, cysteine-rich domain"/>
    <property type="match status" value="1"/>
</dbReference>
<dbReference type="Gene3D" id="2.60.260.20">
    <property type="entry name" value="Urease metallochaperone UreE, N-terminal domain"/>
    <property type="match status" value="2"/>
</dbReference>
<dbReference type="HAMAP" id="MF_01152">
    <property type="entry name" value="DnaJ"/>
    <property type="match status" value="1"/>
</dbReference>
<dbReference type="InterPro" id="IPR012724">
    <property type="entry name" value="DnaJ"/>
</dbReference>
<dbReference type="InterPro" id="IPR002939">
    <property type="entry name" value="DnaJ_C"/>
</dbReference>
<dbReference type="InterPro" id="IPR001623">
    <property type="entry name" value="DnaJ_domain"/>
</dbReference>
<dbReference type="InterPro" id="IPR008971">
    <property type="entry name" value="HSP40/DnaJ_pept-bd"/>
</dbReference>
<dbReference type="InterPro" id="IPR001305">
    <property type="entry name" value="HSP_DnaJ_Cys-rich_dom"/>
</dbReference>
<dbReference type="InterPro" id="IPR036410">
    <property type="entry name" value="HSP_DnaJ_Cys-rich_dom_sf"/>
</dbReference>
<dbReference type="InterPro" id="IPR036869">
    <property type="entry name" value="J_dom_sf"/>
</dbReference>
<dbReference type="NCBIfam" id="TIGR02349">
    <property type="entry name" value="DnaJ_bact"/>
    <property type="match status" value="1"/>
</dbReference>
<dbReference type="NCBIfam" id="NF008035">
    <property type="entry name" value="PRK10767.1"/>
    <property type="match status" value="1"/>
</dbReference>
<dbReference type="PANTHER" id="PTHR43096:SF48">
    <property type="entry name" value="CHAPERONE PROTEIN DNAJ"/>
    <property type="match status" value="1"/>
</dbReference>
<dbReference type="PANTHER" id="PTHR43096">
    <property type="entry name" value="DNAJ HOMOLOG 1, MITOCHONDRIAL-RELATED"/>
    <property type="match status" value="1"/>
</dbReference>
<dbReference type="Pfam" id="PF00226">
    <property type="entry name" value="DnaJ"/>
    <property type="match status" value="1"/>
</dbReference>
<dbReference type="Pfam" id="PF01556">
    <property type="entry name" value="DnaJ_C"/>
    <property type="match status" value="1"/>
</dbReference>
<dbReference type="Pfam" id="PF00684">
    <property type="entry name" value="DnaJ_CXXCXGXG"/>
    <property type="match status" value="1"/>
</dbReference>
<dbReference type="PRINTS" id="PR00625">
    <property type="entry name" value="JDOMAIN"/>
</dbReference>
<dbReference type="SMART" id="SM00271">
    <property type="entry name" value="DnaJ"/>
    <property type="match status" value="1"/>
</dbReference>
<dbReference type="SUPFAM" id="SSF46565">
    <property type="entry name" value="Chaperone J-domain"/>
    <property type="match status" value="1"/>
</dbReference>
<dbReference type="SUPFAM" id="SSF57938">
    <property type="entry name" value="DnaJ/Hsp40 cysteine-rich domain"/>
    <property type="match status" value="1"/>
</dbReference>
<dbReference type="SUPFAM" id="SSF49493">
    <property type="entry name" value="HSP40/DnaJ peptide-binding domain"/>
    <property type="match status" value="2"/>
</dbReference>
<dbReference type="PROSITE" id="PS50076">
    <property type="entry name" value="DNAJ_2"/>
    <property type="match status" value="1"/>
</dbReference>
<dbReference type="PROSITE" id="PS51188">
    <property type="entry name" value="ZF_CR"/>
    <property type="match status" value="1"/>
</dbReference>
<organism>
    <name type="scientific">Stenotrophomonas maltophilia (strain R551-3)</name>
    <dbReference type="NCBI Taxonomy" id="391008"/>
    <lineage>
        <taxon>Bacteria</taxon>
        <taxon>Pseudomonadati</taxon>
        <taxon>Pseudomonadota</taxon>
        <taxon>Gammaproteobacteria</taxon>
        <taxon>Lysobacterales</taxon>
        <taxon>Lysobacteraceae</taxon>
        <taxon>Stenotrophomonas</taxon>
        <taxon>Stenotrophomonas maltophilia group</taxon>
    </lineage>
</organism>
<proteinExistence type="inferred from homology"/>
<accession>B4SSQ7</accession>
<evidence type="ECO:0000255" key="1">
    <source>
        <dbReference type="HAMAP-Rule" id="MF_01152"/>
    </source>
</evidence>
<evidence type="ECO:0000256" key="2">
    <source>
        <dbReference type="SAM" id="MobiDB-lite"/>
    </source>
</evidence>
<sequence length="376" mass="40774">MSKRDYYEVLGVARTANDEELKKAYRRCAMKFHPDRNPGDAAAEASFKECKEAYEVLSDGNKRRMYDSHGHAAFEHGMGGGGGPGGPDMNDIFGDIFGNIFGGAGGGGPRQARRGADIGYVMELDLEEAVRGVERRIEIPTLAECGDCDGSGSEDGKVETCNVCHGRGQVRIQRGIFAMQQACHNCGGRGQIIAKPCKTCHGNGRVEEDKVLSVKVPAGVDTGDRIRLSGEGEAGPAGTPPGDLYVEVRVREHAIFQRDGDDLHCEVPIRISQAALGDTVRVATLGGEAEIRIPAETQTGKLFRLRGKGVRSVRSRSEGDLYCRVVVETPVNLTNDQRKLLEQFEATFNGEDARKHSPKSATFIDGVKGFWDRMTS</sequence>
<name>DNAJ_STRM5</name>
<reference key="1">
    <citation type="submission" date="2008-06" db="EMBL/GenBank/DDBJ databases">
        <title>Complete sequence of Stenotrophomonas maltophilia R551-3.</title>
        <authorList>
            <consortium name="US DOE Joint Genome Institute"/>
            <person name="Lucas S."/>
            <person name="Copeland A."/>
            <person name="Lapidus A."/>
            <person name="Glavina del Rio T."/>
            <person name="Dalin E."/>
            <person name="Tice H."/>
            <person name="Pitluck S."/>
            <person name="Chain P."/>
            <person name="Malfatti S."/>
            <person name="Shin M."/>
            <person name="Vergez L."/>
            <person name="Lang D."/>
            <person name="Schmutz J."/>
            <person name="Larimer F."/>
            <person name="Land M."/>
            <person name="Hauser L."/>
            <person name="Kyrpides N."/>
            <person name="Mikhailova N."/>
            <person name="Taghavi S."/>
            <person name="Monchy S."/>
            <person name="Newman L."/>
            <person name="Vangronsveld J."/>
            <person name="van der Lelie D."/>
            <person name="Richardson P."/>
        </authorList>
    </citation>
    <scope>NUCLEOTIDE SEQUENCE [LARGE SCALE GENOMIC DNA]</scope>
    <source>
        <strain>R551-3</strain>
    </source>
</reference>